<organism>
    <name type="scientific">Mycolicibacterium vanbaalenii (strain DSM 7251 / JCM 13017 / BCRC 16820 / KCTC 9966 / NRRL B-24157 / PYR-1)</name>
    <name type="common">Mycobacterium vanbaalenii</name>
    <dbReference type="NCBI Taxonomy" id="350058"/>
    <lineage>
        <taxon>Bacteria</taxon>
        <taxon>Bacillati</taxon>
        <taxon>Actinomycetota</taxon>
        <taxon>Actinomycetes</taxon>
        <taxon>Mycobacteriales</taxon>
        <taxon>Mycobacteriaceae</taxon>
        <taxon>Mycolicibacterium</taxon>
    </lineage>
</organism>
<gene>
    <name evidence="1" type="primary">cpfC</name>
    <name type="ordered locus">Mvan_2754</name>
</gene>
<keyword id="KW-0963">Cytoplasm</keyword>
<keyword id="KW-0350">Heme biosynthesis</keyword>
<keyword id="KW-0408">Iron</keyword>
<keyword id="KW-0456">Lyase</keyword>
<keyword id="KW-0479">Metal-binding</keyword>
<keyword id="KW-0627">Porphyrin biosynthesis</keyword>
<dbReference type="EC" id="4.99.1.9" evidence="1"/>
<dbReference type="EMBL" id="CP000511">
    <property type="protein sequence ID" value="ABM13561.1"/>
    <property type="molecule type" value="Genomic_DNA"/>
</dbReference>
<dbReference type="RefSeq" id="WP_011779969.1">
    <property type="nucleotide sequence ID" value="NZ_JACKSD010000326.1"/>
</dbReference>
<dbReference type="SMR" id="A1T8R1"/>
<dbReference type="STRING" id="350058.Mvan_2754"/>
<dbReference type="KEGG" id="mva:Mvan_2754"/>
<dbReference type="eggNOG" id="COG0276">
    <property type="taxonomic scope" value="Bacteria"/>
</dbReference>
<dbReference type="HOGENOM" id="CLU_018884_2_0_11"/>
<dbReference type="UniPathway" id="UPA00252"/>
<dbReference type="Proteomes" id="UP000009159">
    <property type="component" value="Chromosome"/>
</dbReference>
<dbReference type="GO" id="GO:0005737">
    <property type="term" value="C:cytoplasm"/>
    <property type="evidence" value="ECO:0007669"/>
    <property type="project" value="UniProtKB-SubCell"/>
</dbReference>
<dbReference type="GO" id="GO:0004325">
    <property type="term" value="F:ferrochelatase activity"/>
    <property type="evidence" value="ECO:0007669"/>
    <property type="project" value="UniProtKB-UniRule"/>
</dbReference>
<dbReference type="GO" id="GO:0046872">
    <property type="term" value="F:metal ion binding"/>
    <property type="evidence" value="ECO:0007669"/>
    <property type="project" value="UniProtKB-KW"/>
</dbReference>
<dbReference type="GO" id="GO:0006783">
    <property type="term" value="P:heme biosynthetic process"/>
    <property type="evidence" value="ECO:0007669"/>
    <property type="project" value="UniProtKB-UniRule"/>
</dbReference>
<dbReference type="CDD" id="cd00419">
    <property type="entry name" value="Ferrochelatase_C"/>
    <property type="match status" value="1"/>
</dbReference>
<dbReference type="CDD" id="cd03411">
    <property type="entry name" value="Ferrochelatase_N"/>
    <property type="match status" value="1"/>
</dbReference>
<dbReference type="FunFam" id="3.40.50.1400:FF:000007">
    <property type="entry name" value="Ferrochelatase"/>
    <property type="match status" value="1"/>
</dbReference>
<dbReference type="Gene3D" id="3.40.50.1400">
    <property type="match status" value="2"/>
</dbReference>
<dbReference type="HAMAP" id="MF_00323">
    <property type="entry name" value="Ferrochelatase"/>
    <property type="match status" value="1"/>
</dbReference>
<dbReference type="InterPro" id="IPR001015">
    <property type="entry name" value="Ferrochelatase"/>
</dbReference>
<dbReference type="InterPro" id="IPR019772">
    <property type="entry name" value="Ferrochelatase_AS"/>
</dbReference>
<dbReference type="InterPro" id="IPR033644">
    <property type="entry name" value="Ferrochelatase_C"/>
</dbReference>
<dbReference type="InterPro" id="IPR033659">
    <property type="entry name" value="Ferrochelatase_N"/>
</dbReference>
<dbReference type="NCBIfam" id="TIGR00109">
    <property type="entry name" value="hemH"/>
    <property type="match status" value="1"/>
</dbReference>
<dbReference type="NCBIfam" id="NF000689">
    <property type="entry name" value="PRK00035.2-1"/>
    <property type="match status" value="1"/>
</dbReference>
<dbReference type="PANTHER" id="PTHR11108">
    <property type="entry name" value="FERROCHELATASE"/>
    <property type="match status" value="1"/>
</dbReference>
<dbReference type="PANTHER" id="PTHR11108:SF1">
    <property type="entry name" value="FERROCHELATASE, MITOCHONDRIAL"/>
    <property type="match status" value="1"/>
</dbReference>
<dbReference type="Pfam" id="PF00762">
    <property type="entry name" value="Ferrochelatase"/>
    <property type="match status" value="1"/>
</dbReference>
<dbReference type="SUPFAM" id="SSF53800">
    <property type="entry name" value="Chelatase"/>
    <property type="match status" value="1"/>
</dbReference>
<dbReference type="PROSITE" id="PS00534">
    <property type="entry name" value="FERROCHELATASE"/>
    <property type="match status" value="1"/>
</dbReference>
<sequence>MSVEALLLLSFGGPEGPEQVMPFLENVTRGRGIPRERLESVAEHYLHFGGVSPINGINRDLIVAIEAELARRGMQMPVYFGNRNWEPYVEDTVAAMRDNGIRRAAVFSTSAWGGYSGCAQYQEDIARGRAAAGPEAPELVKLRQYFDHPLLIEMFADAIRDAAATLPEDLRAQARLVFTAHSIPVRAANRCGPDLYERQVAHTSALVAAAAGYPEYDQVWQSRSGPPQVPWLEPDVGDHLEVLAARGVNAVIVCPVGFVADHIEVVWDLDNELAEQAAEAGIALARASTPNAQPRFAKLVVDLIDELRLGLPPQRVGGGLVPGYGSSVNGALCTPDCSG</sequence>
<feature type="chain" id="PRO_1000019327" description="Coproporphyrin III ferrochelatase">
    <location>
        <begin position="1"/>
        <end position="339"/>
    </location>
</feature>
<feature type="binding site" evidence="1">
    <location>
        <position position="52"/>
    </location>
    <ligand>
        <name>Fe-coproporphyrin III</name>
        <dbReference type="ChEBI" id="CHEBI:68438"/>
    </ligand>
</feature>
<feature type="binding site" evidence="1">
    <location>
        <position position="121"/>
    </location>
    <ligand>
        <name>Fe-coproporphyrin III</name>
        <dbReference type="ChEBI" id="CHEBI:68438"/>
    </ligand>
</feature>
<feature type="binding site" evidence="1">
    <location>
        <position position="181"/>
    </location>
    <ligand>
        <name>Fe(2+)</name>
        <dbReference type="ChEBI" id="CHEBI:29033"/>
    </ligand>
</feature>
<feature type="binding site" evidence="1">
    <location>
        <position position="264"/>
    </location>
    <ligand>
        <name>Fe(2+)</name>
        <dbReference type="ChEBI" id="CHEBI:29033"/>
    </ligand>
</feature>
<accession>A1T8R1</accession>
<protein>
    <recommendedName>
        <fullName evidence="1">Coproporphyrin III ferrochelatase</fullName>
        <ecNumber evidence="1">4.99.1.9</ecNumber>
    </recommendedName>
</protein>
<evidence type="ECO:0000255" key="1">
    <source>
        <dbReference type="HAMAP-Rule" id="MF_00323"/>
    </source>
</evidence>
<proteinExistence type="inferred from homology"/>
<reference key="1">
    <citation type="submission" date="2006-12" db="EMBL/GenBank/DDBJ databases">
        <title>Complete sequence of Mycobacterium vanbaalenii PYR-1.</title>
        <authorList>
            <consortium name="US DOE Joint Genome Institute"/>
            <person name="Copeland A."/>
            <person name="Lucas S."/>
            <person name="Lapidus A."/>
            <person name="Barry K."/>
            <person name="Detter J.C."/>
            <person name="Glavina del Rio T."/>
            <person name="Hammon N."/>
            <person name="Israni S."/>
            <person name="Dalin E."/>
            <person name="Tice H."/>
            <person name="Pitluck S."/>
            <person name="Singan V."/>
            <person name="Schmutz J."/>
            <person name="Larimer F."/>
            <person name="Land M."/>
            <person name="Hauser L."/>
            <person name="Kyrpides N."/>
            <person name="Anderson I.J."/>
            <person name="Miller C."/>
            <person name="Richardson P."/>
        </authorList>
    </citation>
    <scope>NUCLEOTIDE SEQUENCE [LARGE SCALE GENOMIC DNA]</scope>
    <source>
        <strain>DSM 7251 / JCM 13017 / BCRC 16820 / KCTC 9966 / NRRL B-24157 / PYR-1</strain>
    </source>
</reference>
<name>CPFC_MYCVP</name>
<comment type="function">
    <text evidence="1">Involved in coproporphyrin-dependent heme b biosynthesis. Catalyzes the insertion of ferrous iron into coproporphyrin III to form Fe-coproporphyrin III.</text>
</comment>
<comment type="catalytic activity">
    <reaction evidence="1">
        <text>Fe-coproporphyrin III + 2 H(+) = coproporphyrin III + Fe(2+)</text>
        <dbReference type="Rhea" id="RHEA:49572"/>
        <dbReference type="ChEBI" id="CHEBI:15378"/>
        <dbReference type="ChEBI" id="CHEBI:29033"/>
        <dbReference type="ChEBI" id="CHEBI:68438"/>
        <dbReference type="ChEBI" id="CHEBI:131725"/>
        <dbReference type="EC" id="4.99.1.9"/>
    </reaction>
    <physiologicalReaction direction="right-to-left" evidence="1">
        <dbReference type="Rhea" id="RHEA:49574"/>
    </physiologicalReaction>
</comment>
<comment type="pathway">
    <text evidence="1">Porphyrin-containing compound metabolism; protoheme biosynthesis.</text>
</comment>
<comment type="subcellular location">
    <subcellularLocation>
        <location evidence="1">Cytoplasm</location>
    </subcellularLocation>
</comment>
<comment type="similarity">
    <text evidence="1">Belongs to the ferrochelatase family.</text>
</comment>